<evidence type="ECO:0000255" key="1">
    <source>
        <dbReference type="HAMAP-Rule" id="MF_01167"/>
    </source>
</evidence>
<dbReference type="EC" id="2.6.1.87" evidence="1"/>
<dbReference type="EMBL" id="CP000653">
    <property type="protein sequence ID" value="ABP60755.1"/>
    <property type="molecule type" value="Genomic_DNA"/>
</dbReference>
<dbReference type="RefSeq" id="WP_012017470.1">
    <property type="nucleotide sequence ID" value="NC_009436.1"/>
</dbReference>
<dbReference type="SMR" id="A4WAM5"/>
<dbReference type="STRING" id="399742.Ent638_2079"/>
<dbReference type="KEGG" id="ent:Ent638_2079"/>
<dbReference type="eggNOG" id="COG0399">
    <property type="taxonomic scope" value="Bacteria"/>
</dbReference>
<dbReference type="HOGENOM" id="CLU_033332_0_3_6"/>
<dbReference type="OrthoDB" id="9804264at2"/>
<dbReference type="UniPathway" id="UPA00030"/>
<dbReference type="UniPathway" id="UPA00032">
    <property type="reaction ID" value="UER00493"/>
</dbReference>
<dbReference type="Proteomes" id="UP000000230">
    <property type="component" value="Chromosome"/>
</dbReference>
<dbReference type="GO" id="GO:0016020">
    <property type="term" value="C:membrane"/>
    <property type="evidence" value="ECO:0007669"/>
    <property type="project" value="GOC"/>
</dbReference>
<dbReference type="GO" id="GO:0030170">
    <property type="term" value="F:pyridoxal phosphate binding"/>
    <property type="evidence" value="ECO:0007669"/>
    <property type="project" value="TreeGrafter"/>
</dbReference>
<dbReference type="GO" id="GO:0099620">
    <property type="term" value="F:UDP-4-amino-4-deoxy-L-arabinose aminotransferase"/>
    <property type="evidence" value="ECO:0007669"/>
    <property type="project" value="UniProtKB-EC"/>
</dbReference>
<dbReference type="GO" id="GO:0009245">
    <property type="term" value="P:lipid A biosynthetic process"/>
    <property type="evidence" value="ECO:0007669"/>
    <property type="project" value="UniProtKB-KW"/>
</dbReference>
<dbReference type="GO" id="GO:0009103">
    <property type="term" value="P:lipopolysaccharide biosynthetic process"/>
    <property type="evidence" value="ECO:0007669"/>
    <property type="project" value="UniProtKB-UniRule"/>
</dbReference>
<dbReference type="GO" id="GO:0046677">
    <property type="term" value="P:response to antibiotic"/>
    <property type="evidence" value="ECO:0007669"/>
    <property type="project" value="UniProtKB-KW"/>
</dbReference>
<dbReference type="CDD" id="cd00616">
    <property type="entry name" value="AHBA_syn"/>
    <property type="match status" value="1"/>
</dbReference>
<dbReference type="FunFam" id="3.40.640.10:FF:000040">
    <property type="entry name" value="UDP-4-amino-4-deoxy-L-arabinose--oxoglutarate aminotransferase"/>
    <property type="match status" value="1"/>
</dbReference>
<dbReference type="FunFam" id="3.90.1150.10:FF:000030">
    <property type="entry name" value="UDP-4-amino-4-deoxy-L-arabinose--oxoglutarate aminotransferase"/>
    <property type="match status" value="1"/>
</dbReference>
<dbReference type="Gene3D" id="3.90.1150.10">
    <property type="entry name" value="Aspartate Aminotransferase, domain 1"/>
    <property type="match status" value="1"/>
</dbReference>
<dbReference type="Gene3D" id="3.40.640.10">
    <property type="entry name" value="Type I PLP-dependent aspartate aminotransferase-like (Major domain)"/>
    <property type="match status" value="1"/>
</dbReference>
<dbReference type="HAMAP" id="MF_01167">
    <property type="entry name" value="ArnB_transfer"/>
    <property type="match status" value="1"/>
</dbReference>
<dbReference type="InterPro" id="IPR022850">
    <property type="entry name" value="ArnB_NH2Trfase"/>
</dbReference>
<dbReference type="InterPro" id="IPR000653">
    <property type="entry name" value="DegT/StrS_aminotransferase"/>
</dbReference>
<dbReference type="InterPro" id="IPR015424">
    <property type="entry name" value="PyrdxlP-dep_Trfase"/>
</dbReference>
<dbReference type="InterPro" id="IPR015421">
    <property type="entry name" value="PyrdxlP-dep_Trfase_major"/>
</dbReference>
<dbReference type="InterPro" id="IPR015422">
    <property type="entry name" value="PyrdxlP-dep_Trfase_small"/>
</dbReference>
<dbReference type="NCBIfam" id="NF008658">
    <property type="entry name" value="PRK11658.1"/>
    <property type="match status" value="1"/>
</dbReference>
<dbReference type="PANTHER" id="PTHR30244">
    <property type="entry name" value="TRANSAMINASE"/>
    <property type="match status" value="1"/>
</dbReference>
<dbReference type="PANTHER" id="PTHR30244:SF41">
    <property type="entry name" value="UDP-4-AMINO-4-DEOXY-L-ARABINOSE--OXOGLUTARATE AMINOTRANSFERASE"/>
    <property type="match status" value="1"/>
</dbReference>
<dbReference type="Pfam" id="PF01041">
    <property type="entry name" value="DegT_DnrJ_EryC1"/>
    <property type="match status" value="1"/>
</dbReference>
<dbReference type="PIRSF" id="PIRSF000390">
    <property type="entry name" value="PLP_StrS"/>
    <property type="match status" value="1"/>
</dbReference>
<dbReference type="SUPFAM" id="SSF53383">
    <property type="entry name" value="PLP-dependent transferases"/>
    <property type="match status" value="1"/>
</dbReference>
<gene>
    <name evidence="1" type="primary">arnB</name>
    <name type="ordered locus">Ent638_2079</name>
</gene>
<sequence>MNEFLPFSRPAMGPEELAAVSEVLQSGWITTGPKNQALEQAFCALTGNQHSIAVSSATAGMHVALMALGIQAGDEVITPSLTWVSTLNMIVLLGAEPVMIDVDHDTLMVTPQAIEAAITPRTKAIIPVHYAGAPVDIDAIRAVADRHGIPVIEDAAHAAGTYYKGSHVGNRGTAIFSFHAIKNMTCAEGGLIVTDDEQLANRMRSLKFHGLGVDAFDRQTLGRAPQAEVISPGYKYNLADINAAIALVQLKKLEKNNARRTEIAERYLTELANTPFLPLSQPAWAHKHAWHLFIVRVDEATCGISRNGLMDDLKAKGIGTGLHFRAAHTQKYYRERYPALVLPNTEWNSDRICSIPLFPTMTDDDVTRVIAALRDVAGY</sequence>
<organism>
    <name type="scientific">Enterobacter sp. (strain 638)</name>
    <dbReference type="NCBI Taxonomy" id="399742"/>
    <lineage>
        <taxon>Bacteria</taxon>
        <taxon>Pseudomonadati</taxon>
        <taxon>Pseudomonadota</taxon>
        <taxon>Gammaproteobacteria</taxon>
        <taxon>Enterobacterales</taxon>
        <taxon>Enterobacteriaceae</taxon>
        <taxon>Enterobacter</taxon>
    </lineage>
</organism>
<feature type="chain" id="PRO_1000065684" description="UDP-4-amino-4-deoxy-L-arabinose--oxoglutarate aminotransferase">
    <location>
        <begin position="1"/>
        <end position="379"/>
    </location>
</feature>
<feature type="modified residue" description="N6-(pyridoxal phosphate)lysine" evidence="1">
    <location>
        <position position="182"/>
    </location>
</feature>
<name>ARNB_ENT38</name>
<comment type="function">
    <text evidence="1">Catalyzes the conversion of UDP-4-keto-arabinose (UDP-Ara4O) to UDP-4-amino-4-deoxy-L-arabinose (UDP-L-Ara4N). The modified arabinose is attached to lipid A and is required for resistance to polymyxin and cationic antimicrobial peptides.</text>
</comment>
<comment type="catalytic activity">
    <reaction evidence="1">
        <text>UDP-4-amino-4-deoxy-beta-L-arabinose + 2-oxoglutarate = UDP-beta-L-threo-pentopyranos-4-ulose + L-glutamate</text>
        <dbReference type="Rhea" id="RHEA:24710"/>
        <dbReference type="ChEBI" id="CHEBI:16810"/>
        <dbReference type="ChEBI" id="CHEBI:29985"/>
        <dbReference type="ChEBI" id="CHEBI:58708"/>
        <dbReference type="ChEBI" id="CHEBI:58710"/>
        <dbReference type="EC" id="2.6.1.87"/>
    </reaction>
</comment>
<comment type="cofactor">
    <cofactor evidence="1">
        <name>pyridoxal 5'-phosphate</name>
        <dbReference type="ChEBI" id="CHEBI:597326"/>
    </cofactor>
</comment>
<comment type="pathway">
    <text evidence="1">Nucleotide-sugar biosynthesis; UDP-4-deoxy-4-formamido-beta-L-arabinose biosynthesis; UDP-4-deoxy-4-formamido-beta-L-arabinose from UDP-alpha-D-glucuronate: step 2/3.</text>
</comment>
<comment type="pathway">
    <text evidence="1">Bacterial outer membrane biogenesis; lipopolysaccharide biosynthesis.</text>
</comment>
<comment type="subunit">
    <text evidence="1">Homodimer.</text>
</comment>
<comment type="similarity">
    <text evidence="1">Belongs to the DegT/DnrJ/EryC1 family. ArnB subfamily.</text>
</comment>
<protein>
    <recommendedName>
        <fullName evidence="1">UDP-4-amino-4-deoxy-L-arabinose--oxoglutarate aminotransferase</fullName>
        <ecNumber evidence="1">2.6.1.87</ecNumber>
    </recommendedName>
    <alternativeName>
        <fullName evidence="1">UDP-(beta-L-threo-pentapyranosyl-4''-ulose diphosphate) aminotransferase</fullName>
        <shortName evidence="1">UDP-Ara4O aminotransferase</shortName>
    </alternativeName>
    <alternativeName>
        <fullName evidence="1">UDP-4-amino-4-deoxy-L-arabinose aminotransferase</fullName>
    </alternativeName>
</protein>
<reference key="1">
    <citation type="journal article" date="2010" name="PLoS Genet.">
        <title>Genome sequence of the plant growth promoting endophytic bacterium Enterobacter sp. 638.</title>
        <authorList>
            <person name="Taghavi S."/>
            <person name="van der Lelie D."/>
            <person name="Hoffman A."/>
            <person name="Zhang Y.B."/>
            <person name="Walla M.D."/>
            <person name="Vangronsveld J."/>
            <person name="Newman L."/>
            <person name="Monchy S."/>
        </authorList>
    </citation>
    <scope>NUCLEOTIDE SEQUENCE [LARGE SCALE GENOMIC DNA]</scope>
    <source>
        <strain>638</strain>
    </source>
</reference>
<accession>A4WAM5</accession>
<keyword id="KW-0032">Aminotransferase</keyword>
<keyword id="KW-0046">Antibiotic resistance</keyword>
<keyword id="KW-0441">Lipid A biosynthesis</keyword>
<keyword id="KW-0444">Lipid biosynthesis</keyword>
<keyword id="KW-0443">Lipid metabolism</keyword>
<keyword id="KW-0448">Lipopolysaccharide biosynthesis</keyword>
<keyword id="KW-0663">Pyridoxal phosphate</keyword>
<keyword id="KW-0808">Transferase</keyword>
<proteinExistence type="inferred from homology"/>